<comment type="subcellular location">
    <subcellularLocation>
        <location evidence="2">Cell inner membrane</location>
        <topology evidence="1">Single-pass membrane protein</topology>
    </subcellularLocation>
</comment>
<comment type="induction">
    <text evidence="2">By heat shock (shift from 30 to 45 degrees Celsius) (at protein level).</text>
</comment>
<comment type="miscellaneous">
    <text evidence="2">Entirely encoded within the coding gene for gnd (AC P00350), on the same strand within another reading frame. This protein is produced independently of gnd.</text>
</comment>
<comment type="caution">
    <text evidence="4">It is uncertain whether Met-1 or Met-19 is the initiator.</text>
</comment>
<keyword id="KW-0997">Cell inner membrane</keyword>
<keyword id="KW-1003">Cell membrane</keyword>
<keyword id="KW-0903">Direct protein sequencing</keyword>
<keyword id="KW-0472">Membrane</keyword>
<keyword id="KW-1185">Reference proteome</keyword>
<keyword id="KW-0346">Stress response</keyword>
<keyword id="KW-0812">Transmembrane</keyword>
<keyword id="KW-1133">Transmembrane helix</keyword>
<gene>
    <name evidence="3" type="primary">gndA</name>
</gene>
<sequence>MLLLIPSNHISIKETSSLMVVTPSSRTLFVVIVSFQQRALTSSVPVFLAVKRGR</sequence>
<dbReference type="EMBL" id="U00096">
    <property type="status" value="NOT_ANNOTATED_CDS"/>
    <property type="molecule type" value="Genomic_DNA"/>
</dbReference>
<dbReference type="InParanoid" id="P0DQD7"/>
<dbReference type="BioCyc" id="EcoCyc:MONOMER0-4397"/>
<dbReference type="Proteomes" id="UP000000625">
    <property type="component" value="Chromosome"/>
</dbReference>
<dbReference type="GO" id="GO:0016020">
    <property type="term" value="C:membrane"/>
    <property type="evidence" value="ECO:0000314"/>
    <property type="project" value="EcoCyc"/>
</dbReference>
<dbReference type="GO" id="GO:0005886">
    <property type="term" value="C:plasma membrane"/>
    <property type="evidence" value="ECO:0000255"/>
    <property type="project" value="EcoCyc"/>
</dbReference>
<dbReference type="GO" id="GO:0034605">
    <property type="term" value="P:cellular response to heat"/>
    <property type="evidence" value="ECO:0000270"/>
    <property type="project" value="EcoCyc"/>
</dbReference>
<dbReference type="InterPro" id="IPR054412">
    <property type="entry name" value="GndA_dom"/>
</dbReference>
<dbReference type="Pfam" id="PF22051">
    <property type="entry name" value="GndA"/>
    <property type="match status" value="1"/>
</dbReference>
<accession>P0DQD7</accession>
<evidence type="ECO:0000255" key="1"/>
<evidence type="ECO:0000269" key="2">
    <source>
    </source>
</evidence>
<evidence type="ECO:0000303" key="3">
    <source>
    </source>
</evidence>
<evidence type="ECO:0000305" key="4">
    <source>
    </source>
</evidence>
<feature type="chain" id="PRO_0000446502" description="Protein GndA">
    <location>
        <begin position="1"/>
        <end position="54"/>
    </location>
</feature>
<feature type="transmembrane region" description="Helical" evidence="1">
    <location>
        <begin position="28"/>
        <end position="50"/>
    </location>
</feature>
<organism>
    <name type="scientific">Escherichia coli (strain K12)</name>
    <dbReference type="NCBI Taxonomy" id="83333"/>
    <lineage>
        <taxon>Bacteria</taxon>
        <taxon>Pseudomonadati</taxon>
        <taxon>Pseudomonadota</taxon>
        <taxon>Gammaproteobacteria</taxon>
        <taxon>Enterobacterales</taxon>
        <taxon>Enterobacteriaceae</taxon>
        <taxon>Escherichia</taxon>
    </lineage>
</organism>
<name>GNDA_ECOLI</name>
<protein>
    <recommendedName>
        <fullName>Protein GndA</fullName>
    </recommendedName>
</protein>
<proteinExistence type="evidence at protein level"/>
<reference key="1">
    <citation type="journal article" date="1997" name="Science">
        <title>The complete genome sequence of Escherichia coli K-12.</title>
        <authorList>
            <person name="Blattner F.R."/>
            <person name="Plunkett G. III"/>
            <person name="Bloch C.A."/>
            <person name="Perna N.T."/>
            <person name="Burland V."/>
            <person name="Riley M."/>
            <person name="Collado-Vides J."/>
            <person name="Glasner J.D."/>
            <person name="Rode C.K."/>
            <person name="Mayhew G.F."/>
            <person name="Gregor J."/>
            <person name="Davis N.W."/>
            <person name="Kirkpatrick H.A."/>
            <person name="Goeden M.A."/>
            <person name="Rose D.J."/>
            <person name="Mau B."/>
            <person name="Shao Y."/>
        </authorList>
    </citation>
    <scope>NUCLEOTIDE SEQUENCE [LARGE SCALE GENOMIC DNA]</scope>
    <source>
        <strain>K12 / MG1655 / ATCC 47076</strain>
    </source>
</reference>
<reference key="2">
    <citation type="journal article" date="2018" name="Biochemistry">
        <title>Comparative membrane proteomics reveals a nonannotated E. coli heat shock protein.</title>
        <authorList>
            <person name="Yuan P."/>
            <person name="D'Lima N.G."/>
            <person name="Slavoff S.A."/>
        </authorList>
    </citation>
    <scope>PROTEIN SEQUENCE OF 39-51</scope>
    <scope>IDENTIFICATION</scope>
    <scope>SUBCELLULAR LOCATION</scope>
    <scope>INDUCTION BY HEAT SHOCK</scope>
    <source>
        <strain>K12 / MG1655 / ATCC 47076</strain>
    </source>
</reference>